<comment type="function">
    <text evidence="1">Catalyzes the transfer of an acyl group from acyl-phosphate (acyl-PO(4)) to glycerol-3-phosphate (G3P) to form lysophosphatidic acid (LPA). This enzyme utilizes acyl-phosphate as fatty acyl donor, but not acyl-CoA or acyl-ACP.</text>
</comment>
<comment type="catalytic activity">
    <reaction evidence="1">
        <text>an acyl phosphate + sn-glycerol 3-phosphate = a 1-acyl-sn-glycero-3-phosphate + phosphate</text>
        <dbReference type="Rhea" id="RHEA:34075"/>
        <dbReference type="ChEBI" id="CHEBI:43474"/>
        <dbReference type="ChEBI" id="CHEBI:57597"/>
        <dbReference type="ChEBI" id="CHEBI:57970"/>
        <dbReference type="ChEBI" id="CHEBI:59918"/>
        <dbReference type="EC" id="2.3.1.275"/>
    </reaction>
</comment>
<comment type="pathway">
    <text evidence="1">Lipid metabolism; phospholipid metabolism.</text>
</comment>
<comment type="subunit">
    <text evidence="1">Probably interacts with PlsX.</text>
</comment>
<comment type="subcellular location">
    <subcellularLocation>
        <location evidence="1">Cell membrane</location>
        <topology evidence="1">Multi-pass membrane protein</topology>
    </subcellularLocation>
</comment>
<comment type="similarity">
    <text evidence="1">Belongs to the PlsY family.</text>
</comment>
<dbReference type="EC" id="2.3.1.275" evidence="1"/>
<dbReference type="EMBL" id="AJ938182">
    <property type="protein sequence ID" value="CAI80899.1"/>
    <property type="molecule type" value="Genomic_DNA"/>
</dbReference>
<dbReference type="RefSeq" id="WP_000972777.1">
    <property type="nucleotide sequence ID" value="NC_007622.1"/>
</dbReference>
<dbReference type="SMR" id="Q2YXW4"/>
<dbReference type="KEGG" id="sab:SAB1210c"/>
<dbReference type="HOGENOM" id="CLU_081254_4_0_9"/>
<dbReference type="UniPathway" id="UPA00085"/>
<dbReference type="GO" id="GO:0005886">
    <property type="term" value="C:plasma membrane"/>
    <property type="evidence" value="ECO:0007669"/>
    <property type="project" value="UniProtKB-SubCell"/>
</dbReference>
<dbReference type="GO" id="GO:0043772">
    <property type="term" value="F:acyl-phosphate glycerol-3-phosphate acyltransferase activity"/>
    <property type="evidence" value="ECO:0007669"/>
    <property type="project" value="UniProtKB-UniRule"/>
</dbReference>
<dbReference type="GO" id="GO:0008654">
    <property type="term" value="P:phospholipid biosynthetic process"/>
    <property type="evidence" value="ECO:0007669"/>
    <property type="project" value="UniProtKB-UniRule"/>
</dbReference>
<dbReference type="HAMAP" id="MF_01043">
    <property type="entry name" value="PlsY"/>
    <property type="match status" value="1"/>
</dbReference>
<dbReference type="InterPro" id="IPR003811">
    <property type="entry name" value="G3P_acylTferase_PlsY"/>
</dbReference>
<dbReference type="NCBIfam" id="TIGR00023">
    <property type="entry name" value="glycerol-3-phosphate 1-O-acyltransferase PlsY"/>
    <property type="match status" value="1"/>
</dbReference>
<dbReference type="PANTHER" id="PTHR30309:SF0">
    <property type="entry name" value="GLYCEROL-3-PHOSPHATE ACYLTRANSFERASE-RELATED"/>
    <property type="match status" value="1"/>
</dbReference>
<dbReference type="PANTHER" id="PTHR30309">
    <property type="entry name" value="INNER MEMBRANE PROTEIN YGIH"/>
    <property type="match status" value="1"/>
</dbReference>
<dbReference type="Pfam" id="PF02660">
    <property type="entry name" value="G3P_acyltransf"/>
    <property type="match status" value="1"/>
</dbReference>
<dbReference type="SMART" id="SM01207">
    <property type="entry name" value="G3P_acyltransf"/>
    <property type="match status" value="1"/>
</dbReference>
<protein>
    <recommendedName>
        <fullName evidence="1">Glycerol-3-phosphate acyltransferase</fullName>
    </recommendedName>
    <alternativeName>
        <fullName evidence="1">Acyl-PO4 G3P acyltransferase</fullName>
    </alternativeName>
    <alternativeName>
        <fullName evidence="1">Acyl-phosphate--glycerol-3-phosphate acyltransferase</fullName>
    </alternativeName>
    <alternativeName>
        <fullName evidence="1">G3P acyltransferase</fullName>
        <shortName evidence="1">GPAT</shortName>
        <ecNumber evidence="1">2.3.1.275</ecNumber>
    </alternativeName>
    <alternativeName>
        <fullName evidence="1">Lysophosphatidic acid synthase</fullName>
        <shortName evidence="1">LPA synthase</shortName>
    </alternativeName>
</protein>
<proteinExistence type="inferred from homology"/>
<keyword id="KW-1003">Cell membrane</keyword>
<keyword id="KW-0444">Lipid biosynthesis</keyword>
<keyword id="KW-0443">Lipid metabolism</keyword>
<keyword id="KW-0472">Membrane</keyword>
<keyword id="KW-0594">Phospholipid biosynthesis</keyword>
<keyword id="KW-1208">Phospholipid metabolism</keyword>
<keyword id="KW-0808">Transferase</keyword>
<keyword id="KW-0812">Transmembrane</keyword>
<keyword id="KW-1133">Transmembrane helix</keyword>
<reference key="1">
    <citation type="journal article" date="2007" name="PLoS ONE">
        <title>Molecular correlates of host specialization in Staphylococcus aureus.</title>
        <authorList>
            <person name="Herron-Olson L."/>
            <person name="Fitzgerald J.R."/>
            <person name="Musser J.M."/>
            <person name="Kapur V."/>
        </authorList>
    </citation>
    <scope>NUCLEOTIDE SEQUENCE [LARGE SCALE GENOMIC DNA]</scope>
    <source>
        <strain>bovine RF122 / ET3-1</strain>
    </source>
</reference>
<accession>Q2YXW4</accession>
<name>PLSY_STAAB</name>
<organism>
    <name type="scientific">Staphylococcus aureus (strain bovine RF122 / ET3-1)</name>
    <dbReference type="NCBI Taxonomy" id="273036"/>
    <lineage>
        <taxon>Bacteria</taxon>
        <taxon>Bacillati</taxon>
        <taxon>Bacillota</taxon>
        <taxon>Bacilli</taxon>
        <taxon>Bacillales</taxon>
        <taxon>Staphylococcaceae</taxon>
        <taxon>Staphylococcus</taxon>
    </lineage>
</organism>
<feature type="chain" id="PRO_0000250332" description="Glycerol-3-phosphate acyltransferase">
    <location>
        <begin position="1"/>
        <end position="202"/>
    </location>
</feature>
<feature type="transmembrane region" description="Helical" evidence="1">
    <location>
        <begin position="2"/>
        <end position="22"/>
    </location>
</feature>
<feature type="transmembrane region" description="Helical" evidence="1">
    <location>
        <begin position="54"/>
        <end position="74"/>
    </location>
</feature>
<feature type="transmembrane region" description="Helical" evidence="1">
    <location>
        <begin position="85"/>
        <end position="105"/>
    </location>
</feature>
<feature type="transmembrane region" description="Helical" evidence="1">
    <location>
        <begin position="120"/>
        <end position="140"/>
    </location>
</feature>
<feature type="transmembrane region" description="Helical" evidence="1">
    <location>
        <begin position="141"/>
        <end position="161"/>
    </location>
</feature>
<feature type="transmembrane region" description="Helical" evidence="1">
    <location>
        <begin position="162"/>
        <end position="182"/>
    </location>
</feature>
<gene>
    <name evidence="1" type="primary">plsY</name>
    <name type="ordered locus">SAB1210c</name>
</gene>
<evidence type="ECO:0000255" key="1">
    <source>
        <dbReference type="HAMAP-Rule" id="MF_01043"/>
    </source>
</evidence>
<sequence length="202" mass="22246">MMIIVMLLLSYLIGAFPSGFVIGKLFFKKDIRQFGSGNTGATNSFRVLGRPAGFLVTFLDIFKGFITVFFPLWLPVHADGPISTFFTNGLIVGLFAILGHVYPVYLKFQGGKAVATSAGVVLGVNPILLLILAIIFFIILKIFKYVSLASIVAAICCVIGSLIIQDYILLVVSFLVSIILIIRHRSNIARIFRGEEPKIKWM</sequence>